<name>ARGC_RUBXD</name>
<protein>
    <recommendedName>
        <fullName evidence="1">N-acetyl-gamma-glutamyl-phosphate reductase</fullName>
        <shortName evidence="1">AGPR</shortName>
        <ecNumber evidence="1">1.2.1.38</ecNumber>
    </recommendedName>
    <alternativeName>
        <fullName evidence="1">N-acetyl-glutamate semialdehyde dehydrogenase</fullName>
        <shortName evidence="1">NAGSA dehydrogenase</shortName>
    </alternativeName>
</protein>
<dbReference type="EC" id="1.2.1.38" evidence="1"/>
<dbReference type="EMBL" id="CP000386">
    <property type="protein sequence ID" value="ABG05796.1"/>
    <property type="molecule type" value="Genomic_DNA"/>
</dbReference>
<dbReference type="RefSeq" id="WP_011565805.1">
    <property type="nucleotide sequence ID" value="NC_008148.1"/>
</dbReference>
<dbReference type="SMR" id="Q1AS32"/>
<dbReference type="STRING" id="266117.Rxyl_2885"/>
<dbReference type="KEGG" id="rxy:Rxyl_2885"/>
<dbReference type="eggNOG" id="COG0002">
    <property type="taxonomic scope" value="Bacteria"/>
</dbReference>
<dbReference type="HOGENOM" id="CLU_006384_0_1_11"/>
<dbReference type="OrthoDB" id="9801289at2"/>
<dbReference type="PhylomeDB" id="Q1AS32"/>
<dbReference type="UniPathway" id="UPA00068">
    <property type="reaction ID" value="UER00108"/>
</dbReference>
<dbReference type="Proteomes" id="UP000006637">
    <property type="component" value="Chromosome"/>
</dbReference>
<dbReference type="GO" id="GO:0005737">
    <property type="term" value="C:cytoplasm"/>
    <property type="evidence" value="ECO:0007669"/>
    <property type="project" value="UniProtKB-SubCell"/>
</dbReference>
<dbReference type="GO" id="GO:0003942">
    <property type="term" value="F:N-acetyl-gamma-glutamyl-phosphate reductase activity"/>
    <property type="evidence" value="ECO:0007669"/>
    <property type="project" value="UniProtKB-UniRule"/>
</dbReference>
<dbReference type="GO" id="GO:0051287">
    <property type="term" value="F:NAD binding"/>
    <property type="evidence" value="ECO:0007669"/>
    <property type="project" value="InterPro"/>
</dbReference>
<dbReference type="GO" id="GO:0070401">
    <property type="term" value="F:NADP+ binding"/>
    <property type="evidence" value="ECO:0007669"/>
    <property type="project" value="InterPro"/>
</dbReference>
<dbReference type="GO" id="GO:0006526">
    <property type="term" value="P:L-arginine biosynthetic process"/>
    <property type="evidence" value="ECO:0007669"/>
    <property type="project" value="UniProtKB-UniRule"/>
</dbReference>
<dbReference type="CDD" id="cd23934">
    <property type="entry name" value="AGPR_1_C"/>
    <property type="match status" value="1"/>
</dbReference>
<dbReference type="CDD" id="cd17895">
    <property type="entry name" value="AGPR_1_N"/>
    <property type="match status" value="1"/>
</dbReference>
<dbReference type="Gene3D" id="3.30.360.10">
    <property type="entry name" value="Dihydrodipicolinate Reductase, domain 2"/>
    <property type="match status" value="1"/>
</dbReference>
<dbReference type="Gene3D" id="3.40.50.720">
    <property type="entry name" value="NAD(P)-binding Rossmann-like Domain"/>
    <property type="match status" value="1"/>
</dbReference>
<dbReference type="HAMAP" id="MF_00150">
    <property type="entry name" value="ArgC_type1"/>
    <property type="match status" value="1"/>
</dbReference>
<dbReference type="InterPro" id="IPR023013">
    <property type="entry name" value="AGPR_AS"/>
</dbReference>
<dbReference type="InterPro" id="IPR000706">
    <property type="entry name" value="AGPR_type-1"/>
</dbReference>
<dbReference type="InterPro" id="IPR036291">
    <property type="entry name" value="NAD(P)-bd_dom_sf"/>
</dbReference>
<dbReference type="InterPro" id="IPR050085">
    <property type="entry name" value="NAGSA_dehydrogenase"/>
</dbReference>
<dbReference type="InterPro" id="IPR000534">
    <property type="entry name" value="Semialdehyde_DH_NAD-bd"/>
</dbReference>
<dbReference type="NCBIfam" id="TIGR01850">
    <property type="entry name" value="argC"/>
    <property type="match status" value="1"/>
</dbReference>
<dbReference type="PANTHER" id="PTHR32338:SF10">
    <property type="entry name" value="N-ACETYL-GAMMA-GLUTAMYL-PHOSPHATE REDUCTASE, CHLOROPLASTIC-RELATED"/>
    <property type="match status" value="1"/>
</dbReference>
<dbReference type="PANTHER" id="PTHR32338">
    <property type="entry name" value="N-ACETYL-GAMMA-GLUTAMYL-PHOSPHATE REDUCTASE, CHLOROPLASTIC-RELATED-RELATED"/>
    <property type="match status" value="1"/>
</dbReference>
<dbReference type="Pfam" id="PF01118">
    <property type="entry name" value="Semialdhyde_dh"/>
    <property type="match status" value="1"/>
</dbReference>
<dbReference type="Pfam" id="PF22698">
    <property type="entry name" value="Semialdhyde_dhC_1"/>
    <property type="match status" value="1"/>
</dbReference>
<dbReference type="SMART" id="SM00859">
    <property type="entry name" value="Semialdhyde_dh"/>
    <property type="match status" value="1"/>
</dbReference>
<dbReference type="SUPFAM" id="SSF55347">
    <property type="entry name" value="Glyceraldehyde-3-phosphate dehydrogenase-like, C-terminal domain"/>
    <property type="match status" value="1"/>
</dbReference>
<dbReference type="SUPFAM" id="SSF51735">
    <property type="entry name" value="NAD(P)-binding Rossmann-fold domains"/>
    <property type="match status" value="1"/>
</dbReference>
<dbReference type="PROSITE" id="PS01224">
    <property type="entry name" value="ARGC"/>
    <property type="match status" value="1"/>
</dbReference>
<reference key="1">
    <citation type="submission" date="2006-06" db="EMBL/GenBank/DDBJ databases">
        <title>Complete sequence of Rubrobacter xylanophilus DSM 9941.</title>
        <authorList>
            <consortium name="US DOE Joint Genome Institute"/>
            <person name="Copeland A."/>
            <person name="Lucas S."/>
            <person name="Lapidus A."/>
            <person name="Barry K."/>
            <person name="Detter J.C."/>
            <person name="Glavina del Rio T."/>
            <person name="Hammon N."/>
            <person name="Israni S."/>
            <person name="Dalin E."/>
            <person name="Tice H."/>
            <person name="Pitluck S."/>
            <person name="Munk A.C."/>
            <person name="Brettin T."/>
            <person name="Bruce D."/>
            <person name="Han C."/>
            <person name="Tapia R."/>
            <person name="Gilna P."/>
            <person name="Schmutz J."/>
            <person name="Larimer F."/>
            <person name="Land M."/>
            <person name="Hauser L."/>
            <person name="Kyrpides N."/>
            <person name="Lykidis A."/>
            <person name="da Costa M.S."/>
            <person name="Rainey F.A."/>
            <person name="Empadinhas N."/>
            <person name="Jolivet E."/>
            <person name="Battista J.R."/>
            <person name="Richardson P."/>
        </authorList>
    </citation>
    <scope>NUCLEOTIDE SEQUENCE [LARGE SCALE GENOMIC DNA]</scope>
    <source>
        <strain>DSM 9941 / JCM 11954 / NBRC 16129 / PRD-1</strain>
    </source>
</reference>
<accession>Q1AS32</accession>
<organism>
    <name type="scientific">Rubrobacter xylanophilus (strain DSM 9941 / JCM 11954 / NBRC 16129 / PRD-1)</name>
    <dbReference type="NCBI Taxonomy" id="266117"/>
    <lineage>
        <taxon>Bacteria</taxon>
        <taxon>Bacillati</taxon>
        <taxon>Actinomycetota</taxon>
        <taxon>Rubrobacteria</taxon>
        <taxon>Rubrobacterales</taxon>
        <taxon>Rubrobacteraceae</taxon>
        <taxon>Rubrobacter</taxon>
    </lineage>
</organism>
<keyword id="KW-0028">Amino-acid biosynthesis</keyword>
<keyword id="KW-0055">Arginine biosynthesis</keyword>
<keyword id="KW-0963">Cytoplasm</keyword>
<keyword id="KW-0521">NADP</keyword>
<keyword id="KW-0560">Oxidoreductase</keyword>
<keyword id="KW-1185">Reference proteome</keyword>
<comment type="function">
    <text evidence="1">Catalyzes the NADPH-dependent reduction of N-acetyl-5-glutamyl phosphate to yield N-acetyl-L-glutamate 5-semialdehyde.</text>
</comment>
<comment type="catalytic activity">
    <reaction evidence="1">
        <text>N-acetyl-L-glutamate 5-semialdehyde + phosphate + NADP(+) = N-acetyl-L-glutamyl 5-phosphate + NADPH + H(+)</text>
        <dbReference type="Rhea" id="RHEA:21588"/>
        <dbReference type="ChEBI" id="CHEBI:15378"/>
        <dbReference type="ChEBI" id="CHEBI:29123"/>
        <dbReference type="ChEBI" id="CHEBI:43474"/>
        <dbReference type="ChEBI" id="CHEBI:57783"/>
        <dbReference type="ChEBI" id="CHEBI:57936"/>
        <dbReference type="ChEBI" id="CHEBI:58349"/>
        <dbReference type="EC" id="1.2.1.38"/>
    </reaction>
</comment>
<comment type="pathway">
    <text evidence="1">Amino-acid biosynthesis; L-arginine biosynthesis; N(2)-acetyl-L-ornithine from L-glutamate: step 3/4.</text>
</comment>
<comment type="subcellular location">
    <subcellularLocation>
        <location evidence="1">Cytoplasm</location>
    </subcellularLocation>
</comment>
<comment type="similarity">
    <text evidence="1">Belongs to the NAGSA dehydrogenase family. Type 1 subfamily.</text>
</comment>
<evidence type="ECO:0000255" key="1">
    <source>
        <dbReference type="HAMAP-Rule" id="MF_00150"/>
    </source>
</evidence>
<gene>
    <name evidence="1" type="primary">argC</name>
    <name type="ordered locus">Rxyl_2885</name>
</gene>
<sequence>MGLSVGIYGGSGYVGVELVRLLAGHPEVGSLAVASRGHAGRRIGEVYPQVAVGGEYLDPSEVDVSSLDVAFVAYGHGESAEAVRGLLEGGVRLVVDLSADFRLPDVRVYEEWYGEHPAPELLGEAHYGLPEVFGALEGRLVANPGCYPTAAILALAPVVRRMGGEVRSVTINALSGVSGAGAKPSARTHFVSVNESVSPYGVSGGEPRHRHTPEIEIMLRRLGEAPPVTFVPHLLPISRGELETITVEAGELPGAEEVLGWYREDYGGWRFVEAREEVPHISHVANTNRARLSAAVDRRAGKLLLFAAVDNLLKGAAGEAVQNMNLALGYPEDLGLEHLR</sequence>
<feature type="chain" id="PRO_1000096737" description="N-acetyl-gamma-glutamyl-phosphate reductase">
    <location>
        <begin position="1"/>
        <end position="340"/>
    </location>
</feature>
<feature type="active site" evidence="1">
    <location>
        <position position="146"/>
    </location>
</feature>
<proteinExistence type="inferred from homology"/>